<proteinExistence type="inferred from homology"/>
<feature type="chain" id="PRO_0000279921" description="Aliphatic sulfonates import ATP-binding protein SsuB">
    <location>
        <begin position="1"/>
        <end position="245"/>
    </location>
</feature>
<feature type="domain" description="ABC transporter" evidence="1">
    <location>
        <begin position="6"/>
        <end position="225"/>
    </location>
</feature>
<feature type="binding site" evidence="1">
    <location>
        <begin position="38"/>
        <end position="45"/>
    </location>
    <ligand>
        <name>ATP</name>
        <dbReference type="ChEBI" id="CHEBI:30616"/>
    </ligand>
</feature>
<reference key="1">
    <citation type="submission" date="2006-06" db="EMBL/GenBank/DDBJ databases">
        <title>Complete sequence of chromosome of Mycobacterium sp. MCS.</title>
        <authorList>
            <consortium name="US DOE Joint Genome Institute"/>
            <person name="Copeland A."/>
            <person name="Lucas S."/>
            <person name="Lapidus A."/>
            <person name="Barry K."/>
            <person name="Detter J.C."/>
            <person name="Glavina del Rio T."/>
            <person name="Hammon N."/>
            <person name="Israni S."/>
            <person name="Dalin E."/>
            <person name="Tice H."/>
            <person name="Pitluck S."/>
            <person name="Martinez M."/>
            <person name="Schmutz J."/>
            <person name="Larimer F."/>
            <person name="Land M."/>
            <person name="Hauser L."/>
            <person name="Kyrpides N."/>
            <person name="Kim E."/>
            <person name="Miller C.D."/>
            <person name="Hughes J.E."/>
            <person name="Anderson A.J."/>
            <person name="Sims R.C."/>
            <person name="Richardson P."/>
        </authorList>
    </citation>
    <scope>NUCLEOTIDE SEQUENCE [LARGE SCALE GENOMIC DNA]</scope>
    <source>
        <strain>MCS</strain>
    </source>
</reference>
<gene>
    <name evidence="1" type="primary">ssuB</name>
    <name type="ordered locus">Mmcs_2582</name>
</gene>
<keyword id="KW-0067">ATP-binding</keyword>
<keyword id="KW-1003">Cell membrane</keyword>
<keyword id="KW-0472">Membrane</keyword>
<keyword id="KW-0547">Nucleotide-binding</keyword>
<keyword id="KW-1278">Translocase</keyword>
<keyword id="KW-0813">Transport</keyword>
<organism>
    <name type="scientific">Mycobacterium sp. (strain MCS)</name>
    <dbReference type="NCBI Taxonomy" id="164756"/>
    <lineage>
        <taxon>Bacteria</taxon>
        <taxon>Bacillati</taxon>
        <taxon>Actinomycetota</taxon>
        <taxon>Actinomycetes</taxon>
        <taxon>Mycobacteriales</taxon>
        <taxon>Mycobacteriaceae</taxon>
        <taxon>Mycobacterium</taxon>
    </lineage>
</organism>
<sequence>MSAAVVTVRGLRRAFGAQQVLDALDLDIADGEFVAMLGLSGSGKSTLLRILAGLDHQADGSVVVPRSRAVVFQNPRLLPWRRALANVTFALADAGPDAPSRTARGRAALDEVGLADKADAWPLSLSGGEAQRVSLARALVREPDLLLLDEPFGALDALTRLKMYRLLHDLWARRHMAVLHVTHDVDEAILLADRVVVLSDGRVSLDRRVDLPFPRSRGDEGFDDLRRVLLAELGVREEVGHDRGR</sequence>
<evidence type="ECO:0000255" key="1">
    <source>
        <dbReference type="HAMAP-Rule" id="MF_01724"/>
    </source>
</evidence>
<dbReference type="EC" id="7.6.2.14" evidence="1"/>
<dbReference type="EMBL" id="CP000384">
    <property type="protein sequence ID" value="ABG08690.1"/>
    <property type="molecule type" value="Genomic_DNA"/>
</dbReference>
<dbReference type="SMR" id="Q1B8U4"/>
<dbReference type="KEGG" id="mmc:Mmcs_2582"/>
<dbReference type="HOGENOM" id="CLU_000604_1_22_11"/>
<dbReference type="BioCyc" id="MSP164756:G1G6O-2633-MONOMER"/>
<dbReference type="GO" id="GO:0005886">
    <property type="term" value="C:plasma membrane"/>
    <property type="evidence" value="ECO:0007669"/>
    <property type="project" value="UniProtKB-SubCell"/>
</dbReference>
<dbReference type="GO" id="GO:0005524">
    <property type="term" value="F:ATP binding"/>
    <property type="evidence" value="ECO:0007669"/>
    <property type="project" value="UniProtKB-KW"/>
</dbReference>
<dbReference type="GO" id="GO:0016887">
    <property type="term" value="F:ATP hydrolysis activity"/>
    <property type="evidence" value="ECO:0007669"/>
    <property type="project" value="InterPro"/>
</dbReference>
<dbReference type="Gene3D" id="3.40.50.300">
    <property type="entry name" value="P-loop containing nucleotide triphosphate hydrolases"/>
    <property type="match status" value="1"/>
</dbReference>
<dbReference type="InterPro" id="IPR003593">
    <property type="entry name" value="AAA+_ATPase"/>
</dbReference>
<dbReference type="InterPro" id="IPR003439">
    <property type="entry name" value="ABC_transporter-like_ATP-bd"/>
</dbReference>
<dbReference type="InterPro" id="IPR017871">
    <property type="entry name" value="ABC_transporter-like_CS"/>
</dbReference>
<dbReference type="InterPro" id="IPR050166">
    <property type="entry name" value="ABC_transporter_ATP-bind"/>
</dbReference>
<dbReference type="InterPro" id="IPR027417">
    <property type="entry name" value="P-loop_NTPase"/>
</dbReference>
<dbReference type="PANTHER" id="PTHR42788:SF17">
    <property type="entry name" value="ALIPHATIC SULFONATES IMPORT ATP-BINDING PROTEIN SSUB"/>
    <property type="match status" value="1"/>
</dbReference>
<dbReference type="PANTHER" id="PTHR42788">
    <property type="entry name" value="TAURINE IMPORT ATP-BINDING PROTEIN-RELATED"/>
    <property type="match status" value="1"/>
</dbReference>
<dbReference type="Pfam" id="PF00005">
    <property type="entry name" value="ABC_tran"/>
    <property type="match status" value="1"/>
</dbReference>
<dbReference type="SMART" id="SM00382">
    <property type="entry name" value="AAA"/>
    <property type="match status" value="1"/>
</dbReference>
<dbReference type="SUPFAM" id="SSF52540">
    <property type="entry name" value="P-loop containing nucleoside triphosphate hydrolases"/>
    <property type="match status" value="1"/>
</dbReference>
<dbReference type="PROSITE" id="PS00211">
    <property type="entry name" value="ABC_TRANSPORTER_1"/>
    <property type="match status" value="1"/>
</dbReference>
<dbReference type="PROSITE" id="PS50893">
    <property type="entry name" value="ABC_TRANSPORTER_2"/>
    <property type="match status" value="1"/>
</dbReference>
<dbReference type="PROSITE" id="PS51291">
    <property type="entry name" value="SSUB"/>
    <property type="match status" value="1"/>
</dbReference>
<comment type="function">
    <text evidence="1">Part of the ABC transporter complex SsuABC involved in aliphatic sulfonates import. Responsible for energy coupling to the transport system.</text>
</comment>
<comment type="catalytic activity">
    <reaction evidence="1">
        <text>ATP + H2O + aliphatic sulfonate-[sulfonate-binding protein]Side 1 = ADP + phosphate + aliphatic sulfonateSide 2 + [sulfonate-binding protein]Side 1.</text>
        <dbReference type="EC" id="7.6.2.14"/>
    </reaction>
</comment>
<comment type="subunit">
    <text evidence="1">The complex is composed of two ATP-binding proteins (SsuB), two transmembrane proteins (SsuC) and a solute-binding protein (SsuA).</text>
</comment>
<comment type="subcellular location">
    <subcellularLocation>
        <location evidence="1">Cell membrane</location>
        <topology evidence="1">Peripheral membrane protein</topology>
    </subcellularLocation>
</comment>
<comment type="similarity">
    <text evidence="1">Belongs to the ABC transporter superfamily. Aliphatic sulfonates importer (TC 3.A.1.17.2) family.</text>
</comment>
<accession>Q1B8U4</accession>
<name>SSUB_MYCSS</name>
<protein>
    <recommendedName>
        <fullName evidence="1">Aliphatic sulfonates import ATP-binding protein SsuB</fullName>
        <ecNumber evidence="1">7.6.2.14</ecNumber>
    </recommendedName>
</protein>